<feature type="chain" id="PRO_0000389974" description="NADH-quinone oxidoreductase subunit K">
    <location>
        <begin position="1"/>
        <end position="102"/>
    </location>
</feature>
<feature type="transmembrane region" description="Helical" evidence="1">
    <location>
        <begin position="5"/>
        <end position="25"/>
    </location>
</feature>
<feature type="transmembrane region" description="Helical" evidence="1">
    <location>
        <begin position="31"/>
        <end position="51"/>
    </location>
</feature>
<feature type="transmembrane region" description="Helical" evidence="1">
    <location>
        <begin position="66"/>
        <end position="86"/>
    </location>
</feature>
<sequence length="102" mass="10942">MEIGIAHYLTVSAILFTLGVFGIFLNRKNVIVILMSIELILLSVNLNFVAFSSQLGDLVGQVFALFVLTVAAAEAAIGLAILVVFFRNRGSIAVEDVNVMKG</sequence>
<name>NUOK_BRUME</name>
<proteinExistence type="inferred from homology"/>
<gene>
    <name evidence="1" type="primary">nuoK</name>
    <name type="ordered locus">BMEI1148</name>
</gene>
<reference key="1">
    <citation type="journal article" date="2002" name="Proc. Natl. Acad. Sci. U.S.A.">
        <title>The genome sequence of the facultative intracellular pathogen Brucella melitensis.</title>
        <authorList>
            <person name="DelVecchio V.G."/>
            <person name="Kapatral V."/>
            <person name="Redkar R.J."/>
            <person name="Patra G."/>
            <person name="Mujer C."/>
            <person name="Los T."/>
            <person name="Ivanova N."/>
            <person name="Anderson I."/>
            <person name="Bhattacharyya A."/>
            <person name="Lykidis A."/>
            <person name="Reznik G."/>
            <person name="Jablonski L."/>
            <person name="Larsen N."/>
            <person name="D'Souza M."/>
            <person name="Bernal A."/>
            <person name="Mazur M."/>
            <person name="Goltsman E."/>
            <person name="Selkov E."/>
            <person name="Elzer P.H."/>
            <person name="Hagius S."/>
            <person name="O'Callaghan D."/>
            <person name="Letesson J.-J."/>
            <person name="Haselkorn R."/>
            <person name="Kyrpides N.C."/>
            <person name="Overbeek R."/>
        </authorList>
    </citation>
    <scope>NUCLEOTIDE SEQUENCE [LARGE SCALE GENOMIC DNA]</scope>
    <source>
        <strain>ATCC 23456 / CCUG 17765 / NCTC 10094 / 16M</strain>
    </source>
</reference>
<comment type="function">
    <text evidence="1">NDH-1 shuttles electrons from NADH, via FMN and iron-sulfur (Fe-S) centers, to quinones in the respiratory chain. The immediate electron acceptor for the enzyme in this species is believed to be ubiquinone. Couples the redox reaction to proton translocation (for every two electrons transferred, four hydrogen ions are translocated across the cytoplasmic membrane), and thus conserves the redox energy in a proton gradient.</text>
</comment>
<comment type="catalytic activity">
    <reaction evidence="1">
        <text>a quinone + NADH + 5 H(+)(in) = a quinol + NAD(+) + 4 H(+)(out)</text>
        <dbReference type="Rhea" id="RHEA:57888"/>
        <dbReference type="ChEBI" id="CHEBI:15378"/>
        <dbReference type="ChEBI" id="CHEBI:24646"/>
        <dbReference type="ChEBI" id="CHEBI:57540"/>
        <dbReference type="ChEBI" id="CHEBI:57945"/>
        <dbReference type="ChEBI" id="CHEBI:132124"/>
    </reaction>
</comment>
<comment type="subunit">
    <text evidence="1">NDH-1 is composed of 14 different subunits. Subunits NuoA, H, J, K, L, M, N constitute the membrane sector of the complex.</text>
</comment>
<comment type="subcellular location">
    <subcellularLocation>
        <location evidence="1">Cell inner membrane</location>
        <topology evidence="1">Multi-pass membrane protein</topology>
    </subcellularLocation>
</comment>
<comment type="similarity">
    <text evidence="1">Belongs to the complex I subunit 4L family.</text>
</comment>
<dbReference type="EC" id="7.1.1.-" evidence="1"/>
<dbReference type="EMBL" id="AE008917">
    <property type="protein sequence ID" value="AAL52329.1"/>
    <property type="molecule type" value="Genomic_DNA"/>
</dbReference>
<dbReference type="PIR" id="AF3395">
    <property type="entry name" value="AF3395"/>
</dbReference>
<dbReference type="RefSeq" id="WP_002963947.1">
    <property type="nucleotide sequence ID" value="NZ_GG703778.1"/>
</dbReference>
<dbReference type="SMR" id="Q8YGL0"/>
<dbReference type="GeneID" id="97533881"/>
<dbReference type="KEGG" id="bme:BMEI1148"/>
<dbReference type="KEGG" id="bmel:DK63_265"/>
<dbReference type="PATRIC" id="fig|224914.52.peg.274"/>
<dbReference type="eggNOG" id="COG0713">
    <property type="taxonomic scope" value="Bacteria"/>
</dbReference>
<dbReference type="PhylomeDB" id="Q8YGL0"/>
<dbReference type="Proteomes" id="UP000000419">
    <property type="component" value="Chromosome I"/>
</dbReference>
<dbReference type="GO" id="GO:0030964">
    <property type="term" value="C:NADH dehydrogenase complex"/>
    <property type="evidence" value="ECO:0007669"/>
    <property type="project" value="TreeGrafter"/>
</dbReference>
<dbReference type="GO" id="GO:0005886">
    <property type="term" value="C:plasma membrane"/>
    <property type="evidence" value="ECO:0007669"/>
    <property type="project" value="UniProtKB-SubCell"/>
</dbReference>
<dbReference type="GO" id="GO:0050136">
    <property type="term" value="F:NADH:ubiquinone reductase (non-electrogenic) activity"/>
    <property type="evidence" value="ECO:0007669"/>
    <property type="project" value="UniProtKB-UniRule"/>
</dbReference>
<dbReference type="GO" id="GO:0048038">
    <property type="term" value="F:quinone binding"/>
    <property type="evidence" value="ECO:0007669"/>
    <property type="project" value="UniProtKB-KW"/>
</dbReference>
<dbReference type="GO" id="GO:0042773">
    <property type="term" value="P:ATP synthesis coupled electron transport"/>
    <property type="evidence" value="ECO:0007669"/>
    <property type="project" value="InterPro"/>
</dbReference>
<dbReference type="FunFam" id="1.10.287.3510:FF:000001">
    <property type="entry name" value="NADH-quinone oxidoreductase subunit K"/>
    <property type="match status" value="1"/>
</dbReference>
<dbReference type="Gene3D" id="1.10.287.3510">
    <property type="match status" value="1"/>
</dbReference>
<dbReference type="HAMAP" id="MF_01456">
    <property type="entry name" value="NDH1_NuoK"/>
    <property type="match status" value="1"/>
</dbReference>
<dbReference type="InterPro" id="IPR001133">
    <property type="entry name" value="NADH_UbQ_OxRdtase_chain4L/K"/>
</dbReference>
<dbReference type="InterPro" id="IPR039428">
    <property type="entry name" value="NUOK/Mnh_C1-like"/>
</dbReference>
<dbReference type="NCBIfam" id="NF004320">
    <property type="entry name" value="PRK05715.1-2"/>
    <property type="match status" value="1"/>
</dbReference>
<dbReference type="NCBIfam" id="NF004321">
    <property type="entry name" value="PRK05715.1-3"/>
    <property type="match status" value="1"/>
</dbReference>
<dbReference type="NCBIfam" id="NF004323">
    <property type="entry name" value="PRK05715.1-5"/>
    <property type="match status" value="1"/>
</dbReference>
<dbReference type="PANTHER" id="PTHR11434:SF21">
    <property type="entry name" value="NADH DEHYDROGENASE SUBUNIT 4L-RELATED"/>
    <property type="match status" value="1"/>
</dbReference>
<dbReference type="PANTHER" id="PTHR11434">
    <property type="entry name" value="NADH-UBIQUINONE OXIDOREDUCTASE SUBUNIT ND4L"/>
    <property type="match status" value="1"/>
</dbReference>
<dbReference type="Pfam" id="PF00420">
    <property type="entry name" value="Oxidored_q2"/>
    <property type="match status" value="1"/>
</dbReference>
<evidence type="ECO:0000255" key="1">
    <source>
        <dbReference type="HAMAP-Rule" id="MF_01456"/>
    </source>
</evidence>
<organism>
    <name type="scientific">Brucella melitensis biotype 1 (strain ATCC 23456 / CCUG 17765 / NCTC 10094 / 16M)</name>
    <dbReference type="NCBI Taxonomy" id="224914"/>
    <lineage>
        <taxon>Bacteria</taxon>
        <taxon>Pseudomonadati</taxon>
        <taxon>Pseudomonadota</taxon>
        <taxon>Alphaproteobacteria</taxon>
        <taxon>Hyphomicrobiales</taxon>
        <taxon>Brucellaceae</taxon>
        <taxon>Brucella/Ochrobactrum group</taxon>
        <taxon>Brucella</taxon>
    </lineage>
</organism>
<accession>Q8YGL0</accession>
<protein>
    <recommendedName>
        <fullName evidence="1">NADH-quinone oxidoreductase subunit K</fullName>
        <ecNumber evidence="1">7.1.1.-</ecNumber>
    </recommendedName>
    <alternativeName>
        <fullName evidence="1">NADH dehydrogenase I subunit K</fullName>
    </alternativeName>
    <alternativeName>
        <fullName evidence="1">NDH-1 subunit K</fullName>
    </alternativeName>
</protein>
<keyword id="KW-0997">Cell inner membrane</keyword>
<keyword id="KW-1003">Cell membrane</keyword>
<keyword id="KW-0472">Membrane</keyword>
<keyword id="KW-0520">NAD</keyword>
<keyword id="KW-0874">Quinone</keyword>
<keyword id="KW-1278">Translocase</keyword>
<keyword id="KW-0812">Transmembrane</keyword>
<keyword id="KW-1133">Transmembrane helix</keyword>
<keyword id="KW-0813">Transport</keyword>
<keyword id="KW-0830">Ubiquinone</keyword>